<accession>Q55EQ3</accession>
<sequence>MTSSVSNLLTSDKETLSLRTWTPKVKPIATVTMIHGLGEHSGRYEHVFSRFAEQGIKVNAFDQRGHGISSGVRGHSPSLEQSLKDIQLIASTAETDVPHFIYGHSFGGCLALHYNLKKKDHHPAGCIVTSPLIKPAIKVSGVKLSMGNLLGGLMPSWTISNSIDPTLISKDSAVVNEYKQDKLVHNKISLGMAKWMLQRSEQLIDLAPQFDTPLLLVHANDDKITCPKASQQFYDRVPSTVDKTLKLWENMYHEVHNEFAKEEFVTYILEWIKERIENAKNESPSSNINTTTTSTTTTTTTTTSSPVVEESKPVVEESKPVVEESKPVVEESKPVVEESKPEPVVDDSKEKEEKERLEKEEAAAKLEKERLEKEEAERVAKEAEEKRIKDEKEAQENLEKQQQEAAAAAQAEKERLEKEEADKLEKERLEAEAAAAAQAEKERLEAEAAAAAQAEKERLEAEAAAAVQAEKERLEKEEADRLEKEKLEAEAAAATQAEKERLEAEAAAAAQAEKERLEKEETERLEKEKLEAEAAAAAQAEKEKLEAEAAAAAQAEKERLEAEAAAAAQAEKERLEAEAAAAAQAEKERLEAEAAAAAQAEKEEAERLEKEKLEAEAAAAQAEKERLEAEAAAAAQAEKERLEAEAAAAAQAEKEKLEAEAEAAAQAEKERLEKEEAERLEKEKLEAEAAAAQAEKERLEAEAAAAAQAEKEKLEAEAAAAQAEKERLEAEAAAAAQAEKERLEKEETERLEKERLEAEAAAAQAEKERLEAEAAAAAQAEKERLEAEAAAEKAAEETKVEEPVQEETKVEEPVQEEIKVEEPVQEETKVEEPVQEETKVEEPVQEETKVEEPVQEETKVEEPVQEETKVEESTTEQAKPTETENKEETEEGEEVDEASNTTTEQTTTNANQPKKPNNNNNNNKGKGKKGKGKGGRK</sequence>
<organism>
    <name type="scientific">Dictyostelium discoideum</name>
    <name type="common">Social amoeba</name>
    <dbReference type="NCBI Taxonomy" id="44689"/>
    <lineage>
        <taxon>Eukaryota</taxon>
        <taxon>Amoebozoa</taxon>
        <taxon>Evosea</taxon>
        <taxon>Eumycetozoa</taxon>
        <taxon>Dictyostelia</taxon>
        <taxon>Dictyosteliales</taxon>
        <taxon>Dictyosteliaceae</taxon>
        <taxon>Dictyostelium</taxon>
    </lineage>
</organism>
<keyword id="KW-0007">Acetylation</keyword>
<keyword id="KW-0175">Coiled coil</keyword>
<keyword id="KW-0903">Direct protein sequencing</keyword>
<keyword id="KW-0378">Hydrolase</keyword>
<keyword id="KW-1185">Reference proteome</keyword>
<protein>
    <recommendedName>
        <fullName>Uncharacterized abhydrolase domain-containing protein DDB_G0269086</fullName>
        <ecNumber>3.-.-.-</ecNumber>
    </recommendedName>
</protein>
<gene>
    <name type="ORF">DDB_G0269086</name>
</gene>
<dbReference type="EC" id="3.-.-.-"/>
<dbReference type="EMBL" id="AAFI02000004">
    <property type="protein sequence ID" value="EAL73132.2"/>
    <property type="molecule type" value="Genomic_DNA"/>
</dbReference>
<dbReference type="RefSeq" id="XP_646967.2">
    <property type="nucleotide sequence ID" value="XM_641875.2"/>
</dbReference>
<dbReference type="SMR" id="Q55EQ3"/>
<dbReference type="STRING" id="44689.Q55EQ3"/>
<dbReference type="ESTHER" id="dicdi-y9086">
    <property type="family name" value="Monoglyceridelipase_lysophospholip"/>
</dbReference>
<dbReference type="PaxDb" id="44689-DDB0252556"/>
<dbReference type="EnsemblProtists" id="EAL73132">
    <property type="protein sequence ID" value="EAL73132"/>
    <property type="gene ID" value="DDB_G0269086"/>
</dbReference>
<dbReference type="GeneID" id="8616659"/>
<dbReference type="KEGG" id="ddi:DDB_G0269086"/>
<dbReference type="dictyBase" id="DDB_G0269086"/>
<dbReference type="VEuPathDB" id="AmoebaDB:DDB_G0269086"/>
<dbReference type="eggNOG" id="KOG1455">
    <property type="taxonomic scope" value="Eukaryota"/>
</dbReference>
<dbReference type="HOGENOM" id="CLU_312958_0_0_1"/>
<dbReference type="InParanoid" id="Q55EQ3"/>
<dbReference type="OMA" id="HFNPTIN"/>
<dbReference type="Reactome" id="R-DDI-1482883">
    <property type="pathway name" value="Acyl chain remodeling of DAG and TAG"/>
</dbReference>
<dbReference type="Reactome" id="R-DDI-426048">
    <property type="pathway name" value="Arachidonate production from DAG"/>
</dbReference>
<dbReference type="PRO" id="PR:Q55EQ3"/>
<dbReference type="Proteomes" id="UP000002195">
    <property type="component" value="Chromosome 1"/>
</dbReference>
<dbReference type="GO" id="GO:0016020">
    <property type="term" value="C:membrane"/>
    <property type="evidence" value="ECO:0000318"/>
    <property type="project" value="GO_Central"/>
</dbReference>
<dbReference type="GO" id="GO:0016298">
    <property type="term" value="F:lipase activity"/>
    <property type="evidence" value="ECO:0000318"/>
    <property type="project" value="GO_Central"/>
</dbReference>
<dbReference type="FunFam" id="3.40.50.1820:FF:000117">
    <property type="entry name" value="Monoglyceride lipase, putative"/>
    <property type="match status" value="1"/>
</dbReference>
<dbReference type="Gene3D" id="3.40.50.1820">
    <property type="entry name" value="alpha/beta hydrolase"/>
    <property type="match status" value="1"/>
</dbReference>
<dbReference type="InterPro" id="IPR029058">
    <property type="entry name" value="AB_hydrolase_fold"/>
</dbReference>
<dbReference type="InterPro" id="IPR022742">
    <property type="entry name" value="Hydrolase_4"/>
</dbReference>
<dbReference type="InterPro" id="IPR051044">
    <property type="entry name" value="MAG_DAG_Lipase"/>
</dbReference>
<dbReference type="PANTHER" id="PTHR11614">
    <property type="entry name" value="PHOSPHOLIPASE-RELATED"/>
    <property type="match status" value="1"/>
</dbReference>
<dbReference type="Pfam" id="PF12146">
    <property type="entry name" value="Hydrolase_4"/>
    <property type="match status" value="1"/>
</dbReference>
<dbReference type="SUPFAM" id="SSF53474">
    <property type="entry name" value="alpha/beta-Hydrolases"/>
    <property type="match status" value="1"/>
</dbReference>
<reference key="1">
    <citation type="journal article" date="2005" name="Nature">
        <title>The genome of the social amoeba Dictyostelium discoideum.</title>
        <authorList>
            <person name="Eichinger L."/>
            <person name="Pachebat J.A."/>
            <person name="Gloeckner G."/>
            <person name="Rajandream M.A."/>
            <person name="Sucgang R."/>
            <person name="Berriman M."/>
            <person name="Song J."/>
            <person name="Olsen R."/>
            <person name="Szafranski K."/>
            <person name="Xu Q."/>
            <person name="Tunggal B."/>
            <person name="Kummerfeld S."/>
            <person name="Madera M."/>
            <person name="Konfortov B.A."/>
            <person name="Rivero F."/>
            <person name="Bankier A.T."/>
            <person name="Lehmann R."/>
            <person name="Hamlin N."/>
            <person name="Davies R."/>
            <person name="Gaudet P."/>
            <person name="Fey P."/>
            <person name="Pilcher K."/>
            <person name="Chen G."/>
            <person name="Saunders D."/>
            <person name="Sodergren E.J."/>
            <person name="Davis P."/>
            <person name="Kerhornou A."/>
            <person name="Nie X."/>
            <person name="Hall N."/>
            <person name="Anjard C."/>
            <person name="Hemphill L."/>
            <person name="Bason N."/>
            <person name="Farbrother P."/>
            <person name="Desany B."/>
            <person name="Just E."/>
            <person name="Morio T."/>
            <person name="Rost R."/>
            <person name="Churcher C.M."/>
            <person name="Cooper J."/>
            <person name="Haydock S."/>
            <person name="van Driessche N."/>
            <person name="Cronin A."/>
            <person name="Goodhead I."/>
            <person name="Muzny D.M."/>
            <person name="Mourier T."/>
            <person name="Pain A."/>
            <person name="Lu M."/>
            <person name="Harper D."/>
            <person name="Lindsay R."/>
            <person name="Hauser H."/>
            <person name="James K.D."/>
            <person name="Quiles M."/>
            <person name="Madan Babu M."/>
            <person name="Saito T."/>
            <person name="Buchrieser C."/>
            <person name="Wardroper A."/>
            <person name="Felder M."/>
            <person name="Thangavelu M."/>
            <person name="Johnson D."/>
            <person name="Knights A."/>
            <person name="Loulseged H."/>
            <person name="Mungall K.L."/>
            <person name="Oliver K."/>
            <person name="Price C."/>
            <person name="Quail M.A."/>
            <person name="Urushihara H."/>
            <person name="Hernandez J."/>
            <person name="Rabbinowitsch E."/>
            <person name="Steffen D."/>
            <person name="Sanders M."/>
            <person name="Ma J."/>
            <person name="Kohara Y."/>
            <person name="Sharp S."/>
            <person name="Simmonds M.N."/>
            <person name="Spiegler S."/>
            <person name="Tivey A."/>
            <person name="Sugano S."/>
            <person name="White B."/>
            <person name="Walker D."/>
            <person name="Woodward J.R."/>
            <person name="Winckler T."/>
            <person name="Tanaka Y."/>
            <person name="Shaulsky G."/>
            <person name="Schleicher M."/>
            <person name="Weinstock G.M."/>
            <person name="Rosenthal A."/>
            <person name="Cox E.C."/>
            <person name="Chisholm R.L."/>
            <person name="Gibbs R.A."/>
            <person name="Loomis W.F."/>
            <person name="Platzer M."/>
            <person name="Kay R.R."/>
            <person name="Williams J.G."/>
            <person name="Dear P.H."/>
            <person name="Noegel A.A."/>
            <person name="Barrell B.G."/>
            <person name="Kuspa A."/>
        </authorList>
    </citation>
    <scope>NUCLEOTIDE SEQUENCE [LARGE SCALE GENOMIC DNA]</scope>
    <source>
        <strain>AX4</strain>
    </source>
</reference>
<reference key="2">
    <citation type="submission" date="2009-07" db="UniProtKB">
        <authorList>
            <person name="Bienvenut W.V."/>
            <person name="Ura S."/>
            <person name="Insall R.H."/>
        </authorList>
    </citation>
    <scope>PROTEIN SEQUENCE OF 2-19; 51-64 AND 171-187</scope>
    <scope>CLEAVAGE OF INITIATOR METHIONINE</scope>
    <scope>ACETYLATION AT THR-2</scope>
    <scope>IDENTIFICATION BY MASS SPECTROMETRY</scope>
    <source>
        <strain>AX2</strain>
    </source>
</reference>
<name>Y9086_DICDI</name>
<proteinExistence type="evidence at protein level"/>
<feature type="initiator methionine" description="Removed" evidence="4">
    <location>
        <position position="1"/>
    </location>
</feature>
<feature type="chain" id="PRO_0000388372" description="Uncharacterized abhydrolase domain-containing protein DDB_G0269086">
    <location>
        <begin position="2"/>
        <end position="937"/>
    </location>
</feature>
<feature type="region of interest" description="Disordered" evidence="3">
    <location>
        <begin position="281"/>
        <end position="937"/>
    </location>
</feature>
<feature type="coiled-coil region" evidence="2">
    <location>
        <begin position="345"/>
        <end position="802"/>
    </location>
</feature>
<feature type="compositionally biased region" description="Low complexity" evidence="3">
    <location>
        <begin position="290"/>
        <end position="308"/>
    </location>
</feature>
<feature type="compositionally biased region" description="Basic and acidic residues" evidence="3">
    <location>
        <begin position="309"/>
        <end position="402"/>
    </location>
</feature>
<feature type="compositionally biased region" description="Basic and acidic residues" evidence="3">
    <location>
        <begin position="411"/>
        <end position="431"/>
    </location>
</feature>
<feature type="compositionally biased region" description="Basic and acidic residues" evidence="3">
    <location>
        <begin position="469"/>
        <end position="489"/>
    </location>
</feature>
<feature type="compositionally biased region" description="Basic and acidic residues" evidence="3">
    <location>
        <begin position="512"/>
        <end position="532"/>
    </location>
</feature>
<feature type="compositionally biased region" description="Basic and acidic residues" evidence="3">
    <location>
        <begin position="600"/>
        <end position="615"/>
    </location>
</feature>
<feature type="compositionally biased region" description="Basic and acidic residues" evidence="3">
    <location>
        <begin position="667"/>
        <end position="687"/>
    </location>
</feature>
<feature type="compositionally biased region" description="Basic and acidic residues" evidence="3">
    <location>
        <begin position="738"/>
        <end position="758"/>
    </location>
</feature>
<feature type="compositionally biased region" description="Basic and acidic residues" evidence="3">
    <location>
        <begin position="780"/>
        <end position="872"/>
    </location>
</feature>
<feature type="compositionally biased region" description="Acidic residues" evidence="3">
    <location>
        <begin position="887"/>
        <end position="897"/>
    </location>
</feature>
<feature type="compositionally biased region" description="Low complexity" evidence="3">
    <location>
        <begin position="898"/>
        <end position="924"/>
    </location>
</feature>
<feature type="compositionally biased region" description="Basic residues" evidence="3">
    <location>
        <begin position="925"/>
        <end position="937"/>
    </location>
</feature>
<feature type="active site" description="Charge relay system" evidence="1">
    <location>
        <position position="292"/>
    </location>
</feature>
<feature type="modified residue" description="N-acetylthreonine" evidence="4">
    <location>
        <position position="2"/>
    </location>
</feature>
<comment type="similarity">
    <text evidence="5">Belongs to the AB hydrolase superfamily.</text>
</comment>
<evidence type="ECO:0000250" key="1"/>
<evidence type="ECO:0000255" key="2"/>
<evidence type="ECO:0000256" key="3">
    <source>
        <dbReference type="SAM" id="MobiDB-lite"/>
    </source>
</evidence>
<evidence type="ECO:0000269" key="4">
    <source ref="2"/>
</evidence>
<evidence type="ECO:0000305" key="5"/>